<keyword id="KW-0013">ADP-ribosylation</keyword>
<keyword id="KW-0963">Cytoplasm</keyword>
<keyword id="KW-1017">Isopeptide bond</keyword>
<keyword id="KW-0472">Membrane</keyword>
<keyword id="KW-0496">Mitochondrion</keyword>
<keyword id="KW-1000">Mitochondrion outer membrane</keyword>
<keyword id="KW-0539">Nucleus</keyword>
<keyword id="KW-0597">Phosphoprotein</keyword>
<keyword id="KW-0677">Repeat</keyword>
<keyword id="KW-0832">Ubl conjugation</keyword>
<evidence type="ECO:0000250" key="1"/>
<evidence type="ECO:0000250" key="2">
    <source>
        <dbReference type="UniProtKB" id="P0CG48"/>
    </source>
</evidence>
<evidence type="ECO:0000255" key="3">
    <source>
        <dbReference type="PROSITE-ProRule" id="PRU00214"/>
    </source>
</evidence>
<evidence type="ECO:0000305" key="4"/>
<proteinExistence type="inferred from homology"/>
<protein>
    <recommendedName>
        <fullName>Polyubiquitin-C</fullName>
    </recommendedName>
    <component>
        <recommendedName>
            <fullName>Ubiquitin</fullName>
        </recommendedName>
    </component>
</protein>
<reference key="1">
    <citation type="journal article" date="2003" name="J. Mol. Evol.">
        <title>Lineage-specific homogenization of the polyubiquitin gene among human and great apes.</title>
        <authorList>
            <person name="Tachikui H."/>
            <person name="Saitou N."/>
            <person name="Nakajima T."/>
            <person name="Hayasaka I."/>
            <person name="Ishida T."/>
            <person name="Inoue I."/>
        </authorList>
    </citation>
    <scope>NUCLEOTIDE SEQUENCE [GENOMIC DNA]</scope>
</reference>
<gene>
    <name type="primary">UBC</name>
</gene>
<name>UBC_PONPY</name>
<accession>P0CG61</accession>
<accession>Q5RF62</accession>
<accession>Q867C4</accession>
<accession>Q867C5</accession>
<sequence length="761" mass="85585">MQIFVKTLTGKTITLEVEPSDTIENVKAKIQDKEGIPPDQQRLIFAGKQLEDGRTLSDYNIQKESTLHLVLRLRGGMQIFVKTLTGKTITLEVEPSDTIENVKAKIQDKEGIPPDQQRLIFAGKQLEDGRTLSDYNIQKESTLHLVLRLRGGMQIFVKTLTGKTITLEVEPSDTIENVKAKIQDKEGIPPDQQRLIFAGKQLEDGRTLSDYNIQKESTLHLVLRLRGGMQIFVKTLTGKTITLEVEPSDTIENVKAKIQDKEGIPPDQQRLIFAGKQLEDGRTLSDYNIQKESTLHLVLRLRGGMQIFVKTLTGKTITLEVEPSDTIENVKAKIQDKEGIPPDQQRLIFAGKQLEDGRTLSDYNIQKESTLHLVLRLRGGMQIFVKTLTGKTITLEVEPSDTIENVKAKIQDKEGIPPDQQRLIFAGKQLEDGRTLSDYNIQKESTLHLVLRLRGGMQIFVKTLTGKTITLEVEPSDTIENVKAKIQDKEGIPPDQQRLIFAGKQLEDGRTLSDYNIQKESTLHLVLRLRGGMQIFVKTLTGKTITLEVEPSDTIENVKAKIQDKEGIPPDQQRLIFAGKQLEDGRTLSDYNIQKESTLHLVLRLRGGMQIFVKTLTGKTITLEVEPSDTIENVKAKIQDKEGIPPDQQRLIFAGKQLEDGRTLSDYNIQKESTLHLVLRLRGGMQIFVKTLTGKTITLEVEPSDTIENVKAKIQDKEGIPPDQQRLIFAGKQLEDGRTLSDYNIQKESTLHLVLRLRGGV</sequence>
<comment type="function">
    <molecule>Ubiquitin</molecule>
    <text evidence="2">Exists either covalently attached to another protein, or free (unanchored). When covalently bound, it is conjugated to target proteins via an isopeptide bond either as a monomer (monoubiquitin), a polymer linked via different Lys residues of the ubiquitin (polyubiquitin chains) or a linear polymer linked via the initiator Met of the ubiquitin (linear polyubiquitin chains). Polyubiquitin chains, when attached to a target protein, have different functions depending on the Lys residue of the ubiquitin that is linked: Lys-6-linked may be involved in DNA repair; Lys-11-linked is involved in ERAD (endoplasmic reticulum-associated degradation) and in cell-cycle regulation; Lys-29-linked is involved in proteotoxic stress response and cell cycle; Lys-33-linked is involved in kinase modification; Lys-48-linked is involved in protein degradation via the proteasome; Lys-63-linked is involved in endocytosis, DNA-damage responses as well as in signaling processes leading to activation of the transcription factor NF-kappa-B. Linear polymer chains formed via attachment by the initiator Met lead to cell signaling. Ubiquitin is usually conjugated to Lys residues of target proteins, however, in rare cases, conjugation to Cys or Ser residues has been observed. When polyubiquitin is free (unanchored-polyubiquitin), it also has distinct roles, such as in activation of protein kinases, and in signaling (By similarity). During ubiquitination, the acceptor ubiquitin is positioned in the active site via direct interaction with the E2 ubiquitin-conjugating enzymes such as UBE2R2 (By similarity). As a monoubiquitin, its C-terminal glycine is recognized as a C-degron by Cul2-RING (CRL2) E3 ubiquitin-protein ligase complexes (By similarity).</text>
</comment>
<comment type="subcellular location">
    <molecule>Ubiquitin</molecule>
    <subcellularLocation>
        <location evidence="1">Cytoplasm</location>
    </subcellularLocation>
    <subcellularLocation>
        <location evidence="1">Nucleus</location>
    </subcellularLocation>
    <subcellularLocation>
        <location evidence="2">Mitochondrion outer membrane</location>
        <topology evidence="2">Peripheral membrane protein</topology>
    </subcellularLocation>
</comment>
<comment type="PTM">
    <molecule>Ubiquitin</molecule>
    <text evidence="2">Phosphorylated at Ser-65 by PINK1 during mitophagy. Phosphorylated ubiquitin specifically binds and activates parkin (PRKN), triggering mitophagy. Phosphorylation does not affect E1-mediated E2 charging of ubiquitin but affects discharging of E2 enzymes to form polyubiquitin chains. It also affects deubiquitination by deubiquitinase enzymes such as USP30.</text>
</comment>
<comment type="PTM">
    <molecule>Ubiquitin</molecule>
    <text evidence="2">Mono-ADP-ribosylated at the C-terminus by PARP9, a component of the PPAR9-DTX3L complex. ADP-ribosylation requires processing by E1 and E2 enzymes and prevents ubiquitin conjugation to substrates such as histones.</text>
</comment>
<comment type="miscellaneous">
    <text>Ubiquitin is encoded by 4 different genes. Uba52 and Rps27a genes code for a single copy of ubiquitin fused to the ribosomal proteins eL40 and eS31, respectively. UBB and UBC genes code for a polyubiquitin precursor with exact head to tail repeats, the number of repeats differ between species and strains.</text>
</comment>
<comment type="miscellaneous">
    <text>For the sake of clarity sequence features are annotated only for the first chain, and are not repeated for each of the following chains.</text>
</comment>
<comment type="similarity">
    <text evidence="4">Belongs to the ubiquitin family.</text>
</comment>
<feature type="chain" id="PRO_0000396227" description="Ubiquitin">
    <location>
        <begin position="1"/>
        <end position="76"/>
    </location>
</feature>
<feature type="chain" id="PRO_0000396228" description="Ubiquitin">
    <location>
        <begin position="77"/>
        <end position="152"/>
    </location>
</feature>
<feature type="chain" id="PRO_0000396229" description="Ubiquitin">
    <location>
        <begin position="153"/>
        <end position="228"/>
    </location>
</feature>
<feature type="chain" id="PRO_0000396230" description="Ubiquitin">
    <location>
        <begin position="229"/>
        <end position="304"/>
    </location>
</feature>
<feature type="chain" id="PRO_0000396231" description="Ubiquitin">
    <location>
        <begin position="305"/>
        <end position="380"/>
    </location>
</feature>
<feature type="chain" id="PRO_0000396232" description="Ubiquitin">
    <location>
        <begin position="381"/>
        <end position="456"/>
    </location>
</feature>
<feature type="chain" id="PRO_0000396233" description="Ubiquitin">
    <location>
        <begin position="457"/>
        <end position="532"/>
    </location>
</feature>
<feature type="chain" id="PRO_0000396234" description="Ubiquitin">
    <location>
        <begin position="533"/>
        <end position="608"/>
    </location>
</feature>
<feature type="chain" id="PRO_0000396235" description="Ubiquitin">
    <location>
        <begin position="609"/>
        <end position="684"/>
    </location>
</feature>
<feature type="chain" id="PRO_0000396236" description="Ubiquitin">
    <location>
        <begin position="685"/>
        <end position="760"/>
    </location>
</feature>
<feature type="propeptide" id="PRO_0000396237">
    <location>
        <position position="761"/>
    </location>
</feature>
<feature type="domain" description="Ubiquitin-like 1" evidence="3">
    <location>
        <begin position="1"/>
        <end position="76"/>
    </location>
</feature>
<feature type="domain" description="Ubiquitin-like 2" evidence="3">
    <location>
        <begin position="77"/>
        <end position="152"/>
    </location>
</feature>
<feature type="domain" description="Ubiquitin-like 3" evidence="3">
    <location>
        <begin position="153"/>
        <end position="228"/>
    </location>
</feature>
<feature type="domain" description="Ubiquitin-like 4" evidence="3">
    <location>
        <begin position="229"/>
        <end position="304"/>
    </location>
</feature>
<feature type="domain" description="Ubiquitin-like 5" evidence="3">
    <location>
        <begin position="305"/>
        <end position="380"/>
    </location>
</feature>
<feature type="domain" description="Ubiquitin-like 6" evidence="3">
    <location>
        <begin position="381"/>
        <end position="456"/>
    </location>
</feature>
<feature type="domain" description="Ubiquitin-like 7" evidence="3">
    <location>
        <begin position="457"/>
        <end position="532"/>
    </location>
</feature>
<feature type="domain" description="Ubiquitin-like 8" evidence="3">
    <location>
        <begin position="533"/>
        <end position="608"/>
    </location>
</feature>
<feature type="domain" description="Ubiquitin-like 9" evidence="3">
    <location>
        <begin position="609"/>
        <end position="684"/>
    </location>
</feature>
<feature type="domain" description="Ubiquitin-like 10" evidence="3">
    <location>
        <begin position="685"/>
        <end position="760"/>
    </location>
</feature>
<feature type="site" description="Interacts with activating enzyme">
    <location>
        <position position="54"/>
    </location>
</feature>
<feature type="site" description="Essential for function">
    <location>
        <position position="68"/>
    </location>
</feature>
<feature type="site" description="Interacts with activating enzyme">
    <location>
        <position position="72"/>
    </location>
</feature>
<feature type="modified residue" description="Phosphoserine; by PINK1" evidence="2">
    <location>
        <position position="65"/>
    </location>
</feature>
<feature type="modified residue" description="ADP-ribosylglycine" evidence="2">
    <location>
        <position position="76"/>
    </location>
</feature>
<feature type="modified residue" description="Phosphoserine" evidence="2">
    <location>
        <position position="141"/>
    </location>
</feature>
<feature type="cross-link" description="Glycyl lysine isopeptide (Lys-Gly) (interchain with G-Cter in ubiquitin)" evidence="2">
    <location>
        <position position="6"/>
    </location>
</feature>
<feature type="cross-link" description="Glycyl lysine isopeptide (Lys-Gly) (interchain with G-Cter in ubiquitin)" evidence="2">
    <location>
        <position position="11"/>
    </location>
</feature>
<feature type="cross-link" description="Glycyl lysine isopeptide (Lys-Gly) (interchain with G-Cter in ubiquitin)" evidence="2">
    <location>
        <position position="27"/>
    </location>
</feature>
<feature type="cross-link" description="Glycyl lysine isopeptide (Lys-Gly) (interchain with G-Cter in ubiquitin)" evidence="2">
    <location>
        <position position="29"/>
    </location>
</feature>
<feature type="cross-link" description="Glycyl lysine isopeptide (Lys-Gly) (interchain with G-Cter in ubiquitin)" evidence="2">
    <location>
        <position position="33"/>
    </location>
</feature>
<feature type="cross-link" description="Glycyl lysine isopeptide (Lys-Gly) (interchain with G-Cter in ubiquitin)" evidence="2">
    <location>
        <position position="48"/>
    </location>
</feature>
<feature type="cross-link" description="Glycyl lysine isopeptide (Lys-Gly) (interchain with G-Cter in ubiquitin)" evidence="2">
    <location>
        <position position="63"/>
    </location>
</feature>
<feature type="cross-link" description="Glycyl lysine isopeptide (Gly-Lys) (interchain with K-? in acceptor proteins)" evidence="3">
    <location>
        <position position="76"/>
    </location>
</feature>
<dbReference type="EMBL" id="AB089616">
    <property type="protein sequence ID" value="BAC56954.1"/>
    <property type="molecule type" value="Genomic_DNA"/>
</dbReference>
<dbReference type="RefSeq" id="XP_054299235.1">
    <property type="nucleotide sequence ID" value="XM_054443260.2"/>
</dbReference>
<dbReference type="RefSeq" id="XP_054299236.1">
    <property type="nucleotide sequence ID" value="XM_054443261.1"/>
</dbReference>
<dbReference type="SMR" id="P0CG61"/>
<dbReference type="GeneID" id="129009750"/>
<dbReference type="GO" id="GO:0005741">
    <property type="term" value="C:mitochondrial outer membrane"/>
    <property type="evidence" value="ECO:0007669"/>
    <property type="project" value="UniProtKB-SubCell"/>
</dbReference>
<dbReference type="GO" id="GO:0005634">
    <property type="term" value="C:nucleus"/>
    <property type="evidence" value="ECO:0007669"/>
    <property type="project" value="UniProtKB-SubCell"/>
</dbReference>
<dbReference type="CDD" id="cd01803">
    <property type="entry name" value="Ubl_ubiquitin"/>
    <property type="match status" value="10"/>
</dbReference>
<dbReference type="FunFam" id="3.10.20.90:FF:000158">
    <property type="entry name" value="Polyubiquitin 5"/>
    <property type="match status" value="10"/>
</dbReference>
<dbReference type="Gene3D" id="3.10.20.90">
    <property type="entry name" value="Phosphatidylinositol 3-kinase Catalytic Subunit, Chain A, domain 1"/>
    <property type="match status" value="10"/>
</dbReference>
<dbReference type="InterPro" id="IPR000626">
    <property type="entry name" value="Ubiquitin-like_dom"/>
</dbReference>
<dbReference type="InterPro" id="IPR029071">
    <property type="entry name" value="Ubiquitin-like_domsf"/>
</dbReference>
<dbReference type="InterPro" id="IPR019954">
    <property type="entry name" value="Ubiquitin_CS"/>
</dbReference>
<dbReference type="InterPro" id="IPR019956">
    <property type="entry name" value="Ubiquitin_dom"/>
</dbReference>
<dbReference type="InterPro" id="IPR050158">
    <property type="entry name" value="Ubiquitin_ubiquitin-like"/>
</dbReference>
<dbReference type="PANTHER" id="PTHR10666">
    <property type="entry name" value="UBIQUITIN"/>
    <property type="match status" value="1"/>
</dbReference>
<dbReference type="Pfam" id="PF00240">
    <property type="entry name" value="ubiquitin"/>
    <property type="match status" value="10"/>
</dbReference>
<dbReference type="PRINTS" id="PR00348">
    <property type="entry name" value="UBIQUITIN"/>
</dbReference>
<dbReference type="SMART" id="SM00213">
    <property type="entry name" value="UBQ"/>
    <property type="match status" value="10"/>
</dbReference>
<dbReference type="SUPFAM" id="SSF54236">
    <property type="entry name" value="Ubiquitin-like"/>
    <property type="match status" value="10"/>
</dbReference>
<dbReference type="PROSITE" id="PS00299">
    <property type="entry name" value="UBIQUITIN_1"/>
    <property type="match status" value="10"/>
</dbReference>
<dbReference type="PROSITE" id="PS50053">
    <property type="entry name" value="UBIQUITIN_2"/>
    <property type="match status" value="10"/>
</dbReference>
<organism>
    <name type="scientific">Pongo pygmaeus</name>
    <name type="common">Bornean orangutan</name>
    <dbReference type="NCBI Taxonomy" id="9600"/>
    <lineage>
        <taxon>Eukaryota</taxon>
        <taxon>Metazoa</taxon>
        <taxon>Chordata</taxon>
        <taxon>Craniata</taxon>
        <taxon>Vertebrata</taxon>
        <taxon>Euteleostomi</taxon>
        <taxon>Mammalia</taxon>
        <taxon>Eutheria</taxon>
        <taxon>Euarchontoglires</taxon>
        <taxon>Primates</taxon>
        <taxon>Haplorrhini</taxon>
        <taxon>Catarrhini</taxon>
        <taxon>Hominidae</taxon>
        <taxon>Pongo</taxon>
    </lineage>
</organism>